<reference key="1">
    <citation type="journal article" date="2005" name="Proc. Natl. Acad. Sci. U.S.A.">
        <title>Comparison of the complete genome sequences of Pseudomonas syringae pv. syringae B728a and pv. tomato DC3000.</title>
        <authorList>
            <person name="Feil H."/>
            <person name="Feil W.S."/>
            <person name="Chain P."/>
            <person name="Larimer F."/>
            <person name="Dibartolo G."/>
            <person name="Copeland A."/>
            <person name="Lykidis A."/>
            <person name="Trong S."/>
            <person name="Nolan M."/>
            <person name="Goltsman E."/>
            <person name="Thiel J."/>
            <person name="Malfatti S."/>
            <person name="Loper J.E."/>
            <person name="Lapidus A."/>
            <person name="Detter J.C."/>
            <person name="Land M."/>
            <person name="Richardson P.M."/>
            <person name="Kyrpides N.C."/>
            <person name="Ivanova N."/>
            <person name="Lindow S.E."/>
        </authorList>
    </citation>
    <scope>NUCLEOTIDE SEQUENCE [LARGE SCALE GENOMIC DNA]</scope>
    <source>
        <strain>B728a</strain>
    </source>
</reference>
<feature type="chain" id="PRO_0000329788" description="Polyribonucleotide nucleotidyltransferase">
    <location>
        <begin position="1"/>
        <end position="701"/>
    </location>
</feature>
<feature type="domain" description="KH" evidence="1">
    <location>
        <begin position="554"/>
        <end position="613"/>
    </location>
</feature>
<feature type="domain" description="S1 motif" evidence="1">
    <location>
        <begin position="623"/>
        <end position="691"/>
    </location>
</feature>
<feature type="binding site" evidence="1">
    <location>
        <position position="487"/>
    </location>
    <ligand>
        <name>Mg(2+)</name>
        <dbReference type="ChEBI" id="CHEBI:18420"/>
    </ligand>
</feature>
<feature type="binding site" evidence="1">
    <location>
        <position position="493"/>
    </location>
    <ligand>
        <name>Mg(2+)</name>
        <dbReference type="ChEBI" id="CHEBI:18420"/>
    </ligand>
</feature>
<gene>
    <name evidence="1" type="primary">pnp</name>
    <name type="ordered locus">Psyr_4176</name>
</gene>
<evidence type="ECO:0000255" key="1">
    <source>
        <dbReference type="HAMAP-Rule" id="MF_01595"/>
    </source>
</evidence>
<protein>
    <recommendedName>
        <fullName evidence="1">Polyribonucleotide nucleotidyltransferase</fullName>
        <ecNumber evidence="1">2.7.7.8</ecNumber>
    </recommendedName>
    <alternativeName>
        <fullName evidence="1">Polynucleotide phosphorylase</fullName>
        <shortName evidence="1">PNPase</shortName>
    </alternativeName>
</protein>
<keyword id="KW-0963">Cytoplasm</keyword>
<keyword id="KW-0460">Magnesium</keyword>
<keyword id="KW-0479">Metal-binding</keyword>
<keyword id="KW-0548">Nucleotidyltransferase</keyword>
<keyword id="KW-0694">RNA-binding</keyword>
<keyword id="KW-0808">Transferase</keyword>
<proteinExistence type="inferred from homology"/>
<comment type="function">
    <text evidence="1">Involved in mRNA degradation. Catalyzes the phosphorolysis of single-stranded polyribonucleotides processively in the 3'- to 5'-direction.</text>
</comment>
<comment type="catalytic activity">
    <reaction evidence="1">
        <text>RNA(n+1) + phosphate = RNA(n) + a ribonucleoside 5'-diphosphate</text>
        <dbReference type="Rhea" id="RHEA:22096"/>
        <dbReference type="Rhea" id="RHEA-COMP:14527"/>
        <dbReference type="Rhea" id="RHEA-COMP:17342"/>
        <dbReference type="ChEBI" id="CHEBI:43474"/>
        <dbReference type="ChEBI" id="CHEBI:57930"/>
        <dbReference type="ChEBI" id="CHEBI:140395"/>
        <dbReference type="EC" id="2.7.7.8"/>
    </reaction>
</comment>
<comment type="cofactor">
    <cofactor evidence="1">
        <name>Mg(2+)</name>
        <dbReference type="ChEBI" id="CHEBI:18420"/>
    </cofactor>
</comment>
<comment type="subunit">
    <text evidence="1">Component of the RNA degradosome, which is a multiprotein complex involved in RNA processing and mRNA degradation.</text>
</comment>
<comment type="subcellular location">
    <subcellularLocation>
        <location evidence="1">Cytoplasm</location>
    </subcellularLocation>
</comment>
<comment type="similarity">
    <text evidence="1">Belongs to the polyribonucleotide nucleotidyltransferase family.</text>
</comment>
<sequence length="701" mass="74942">MNPVIKKFQFGQSTVTLETGRIARQASGAVLVTVDDDVSVLVTVVGAKQADAGKGFFPLSVHYQEKTYAAGKIPGGFFKREGRPSEKETLTSRLIDRPIRPLFPEGFMNEVQVVCTVVSTSKKIDPDIAAMIGTSAALAISGIPFDGPVGAARVAFHESTGYLLNPTYEQLQASSLDMVVAGTSEAVLMVESEAKELTEDQMLGAVLFAHDEFQVVINAIKELAAEAAKPTWDWQPKPEATALLGAIRAEFGDAISQAYTITVKADRYARLGELKDQVVAKLAVEDGSPSASEVKAAFGEIEYRTVRENIVNGKPRIDGRDTRTVRPLNIEVGVLPKTHGSALFTRGETQALVVATLGTARDAQLLDTLEGEKKDPFMLHYNFPPFSVGECGRMGGAGRREIGHGRLARRSVQAMLPGADVFPYTIRVVSEITESNGSSSMASVCGASLALMDAGVPMKAPVAGIAMGLVKEGEKFAILTDILGDEDHLGDMDFKVAGTSKGVTALQMDIKIKGITEEIMEIALGQALEARLNILGQMNQIIGQSRNELSANAPTMIAMKIDTDKIRDVIGKGGATIRAICEETKASIDIEDDGSIKIFGESKEAAEAARQRVLGITAEAEIGKIYIGKVERIVDFGAFVNILPGKDGLVHISMLSDARVEKVTDILKEGQEVEVLVLDVDNRGRIKLSIKDVAAAKASGV</sequence>
<organism>
    <name type="scientific">Pseudomonas syringae pv. syringae (strain B728a)</name>
    <dbReference type="NCBI Taxonomy" id="205918"/>
    <lineage>
        <taxon>Bacteria</taxon>
        <taxon>Pseudomonadati</taxon>
        <taxon>Pseudomonadota</taxon>
        <taxon>Gammaproteobacteria</taxon>
        <taxon>Pseudomonadales</taxon>
        <taxon>Pseudomonadaceae</taxon>
        <taxon>Pseudomonas</taxon>
        <taxon>Pseudomonas syringae</taxon>
    </lineage>
</organism>
<accession>Q4ZNR6</accession>
<name>PNP_PSEU2</name>
<dbReference type="EC" id="2.7.7.8" evidence="1"/>
<dbReference type="EMBL" id="CP000075">
    <property type="protein sequence ID" value="AAY39206.1"/>
    <property type="molecule type" value="Genomic_DNA"/>
</dbReference>
<dbReference type="RefSeq" id="WP_011268879.1">
    <property type="nucleotide sequence ID" value="NC_007005.1"/>
</dbReference>
<dbReference type="RefSeq" id="YP_237244.1">
    <property type="nucleotide sequence ID" value="NC_007005.1"/>
</dbReference>
<dbReference type="SMR" id="Q4ZNR6"/>
<dbReference type="STRING" id="205918.Psyr_4176"/>
<dbReference type="KEGG" id="psb:Psyr_4176"/>
<dbReference type="PATRIC" id="fig|205918.7.peg.4302"/>
<dbReference type="eggNOG" id="COG1185">
    <property type="taxonomic scope" value="Bacteria"/>
</dbReference>
<dbReference type="HOGENOM" id="CLU_004217_2_2_6"/>
<dbReference type="OrthoDB" id="9804305at2"/>
<dbReference type="Proteomes" id="UP000000426">
    <property type="component" value="Chromosome"/>
</dbReference>
<dbReference type="GO" id="GO:0005829">
    <property type="term" value="C:cytosol"/>
    <property type="evidence" value="ECO:0007669"/>
    <property type="project" value="TreeGrafter"/>
</dbReference>
<dbReference type="GO" id="GO:0000175">
    <property type="term" value="F:3'-5'-RNA exonuclease activity"/>
    <property type="evidence" value="ECO:0007669"/>
    <property type="project" value="TreeGrafter"/>
</dbReference>
<dbReference type="GO" id="GO:0000287">
    <property type="term" value="F:magnesium ion binding"/>
    <property type="evidence" value="ECO:0007669"/>
    <property type="project" value="UniProtKB-UniRule"/>
</dbReference>
<dbReference type="GO" id="GO:0004654">
    <property type="term" value="F:polyribonucleotide nucleotidyltransferase activity"/>
    <property type="evidence" value="ECO:0007669"/>
    <property type="project" value="UniProtKB-UniRule"/>
</dbReference>
<dbReference type="GO" id="GO:0003723">
    <property type="term" value="F:RNA binding"/>
    <property type="evidence" value="ECO:0007669"/>
    <property type="project" value="UniProtKB-UniRule"/>
</dbReference>
<dbReference type="GO" id="GO:0006402">
    <property type="term" value="P:mRNA catabolic process"/>
    <property type="evidence" value="ECO:0007669"/>
    <property type="project" value="UniProtKB-UniRule"/>
</dbReference>
<dbReference type="GO" id="GO:0006396">
    <property type="term" value="P:RNA processing"/>
    <property type="evidence" value="ECO:0007669"/>
    <property type="project" value="InterPro"/>
</dbReference>
<dbReference type="CDD" id="cd02393">
    <property type="entry name" value="KH-I_PNPase"/>
    <property type="match status" value="1"/>
</dbReference>
<dbReference type="CDD" id="cd11363">
    <property type="entry name" value="RNase_PH_PNPase_1"/>
    <property type="match status" value="1"/>
</dbReference>
<dbReference type="CDD" id="cd11364">
    <property type="entry name" value="RNase_PH_PNPase_2"/>
    <property type="match status" value="1"/>
</dbReference>
<dbReference type="CDD" id="cd04472">
    <property type="entry name" value="S1_PNPase"/>
    <property type="match status" value="1"/>
</dbReference>
<dbReference type="FunFam" id="2.40.50.140:FF:000023">
    <property type="entry name" value="Polyribonucleotide nucleotidyltransferase"/>
    <property type="match status" value="1"/>
</dbReference>
<dbReference type="FunFam" id="3.30.1370.10:FF:000001">
    <property type="entry name" value="Polyribonucleotide nucleotidyltransferase"/>
    <property type="match status" value="1"/>
</dbReference>
<dbReference type="FunFam" id="3.30.230.70:FF:000001">
    <property type="entry name" value="Polyribonucleotide nucleotidyltransferase"/>
    <property type="match status" value="1"/>
</dbReference>
<dbReference type="FunFam" id="3.30.230.70:FF:000002">
    <property type="entry name" value="Polyribonucleotide nucleotidyltransferase"/>
    <property type="match status" value="1"/>
</dbReference>
<dbReference type="Gene3D" id="3.30.230.70">
    <property type="entry name" value="GHMP Kinase, N-terminal domain"/>
    <property type="match status" value="2"/>
</dbReference>
<dbReference type="Gene3D" id="3.30.1370.10">
    <property type="entry name" value="K Homology domain, type 1"/>
    <property type="match status" value="1"/>
</dbReference>
<dbReference type="Gene3D" id="2.40.50.140">
    <property type="entry name" value="Nucleic acid-binding proteins"/>
    <property type="match status" value="1"/>
</dbReference>
<dbReference type="HAMAP" id="MF_01595">
    <property type="entry name" value="PNPase"/>
    <property type="match status" value="1"/>
</dbReference>
<dbReference type="InterPro" id="IPR001247">
    <property type="entry name" value="ExoRNase_PH_dom1"/>
</dbReference>
<dbReference type="InterPro" id="IPR015847">
    <property type="entry name" value="ExoRNase_PH_dom2"/>
</dbReference>
<dbReference type="InterPro" id="IPR036345">
    <property type="entry name" value="ExoRNase_PH_dom2_sf"/>
</dbReference>
<dbReference type="InterPro" id="IPR004087">
    <property type="entry name" value="KH_dom"/>
</dbReference>
<dbReference type="InterPro" id="IPR004088">
    <property type="entry name" value="KH_dom_type_1"/>
</dbReference>
<dbReference type="InterPro" id="IPR036612">
    <property type="entry name" value="KH_dom_type_1_sf"/>
</dbReference>
<dbReference type="InterPro" id="IPR012340">
    <property type="entry name" value="NA-bd_OB-fold"/>
</dbReference>
<dbReference type="InterPro" id="IPR012162">
    <property type="entry name" value="PNPase"/>
</dbReference>
<dbReference type="InterPro" id="IPR027408">
    <property type="entry name" value="PNPase/RNase_PH_dom_sf"/>
</dbReference>
<dbReference type="InterPro" id="IPR015848">
    <property type="entry name" value="PNPase_PH_RNA-bd_bac/org-type"/>
</dbReference>
<dbReference type="InterPro" id="IPR020568">
    <property type="entry name" value="Ribosomal_Su5_D2-typ_SF"/>
</dbReference>
<dbReference type="InterPro" id="IPR003029">
    <property type="entry name" value="S1_domain"/>
</dbReference>
<dbReference type="NCBIfam" id="TIGR03591">
    <property type="entry name" value="polynuc_phos"/>
    <property type="match status" value="1"/>
</dbReference>
<dbReference type="NCBIfam" id="NF008805">
    <property type="entry name" value="PRK11824.1"/>
    <property type="match status" value="1"/>
</dbReference>
<dbReference type="PANTHER" id="PTHR11252">
    <property type="entry name" value="POLYRIBONUCLEOTIDE NUCLEOTIDYLTRANSFERASE"/>
    <property type="match status" value="1"/>
</dbReference>
<dbReference type="PANTHER" id="PTHR11252:SF0">
    <property type="entry name" value="POLYRIBONUCLEOTIDE NUCLEOTIDYLTRANSFERASE 1, MITOCHONDRIAL"/>
    <property type="match status" value="1"/>
</dbReference>
<dbReference type="Pfam" id="PF00013">
    <property type="entry name" value="KH_1"/>
    <property type="match status" value="1"/>
</dbReference>
<dbReference type="Pfam" id="PF03726">
    <property type="entry name" value="PNPase"/>
    <property type="match status" value="1"/>
</dbReference>
<dbReference type="Pfam" id="PF01138">
    <property type="entry name" value="RNase_PH"/>
    <property type="match status" value="2"/>
</dbReference>
<dbReference type="Pfam" id="PF03725">
    <property type="entry name" value="RNase_PH_C"/>
    <property type="match status" value="2"/>
</dbReference>
<dbReference type="Pfam" id="PF00575">
    <property type="entry name" value="S1"/>
    <property type="match status" value="1"/>
</dbReference>
<dbReference type="PIRSF" id="PIRSF005499">
    <property type="entry name" value="PNPase"/>
    <property type="match status" value="1"/>
</dbReference>
<dbReference type="SMART" id="SM00322">
    <property type="entry name" value="KH"/>
    <property type="match status" value="1"/>
</dbReference>
<dbReference type="SMART" id="SM00316">
    <property type="entry name" value="S1"/>
    <property type="match status" value="1"/>
</dbReference>
<dbReference type="SUPFAM" id="SSF54791">
    <property type="entry name" value="Eukaryotic type KH-domain (KH-domain type I)"/>
    <property type="match status" value="1"/>
</dbReference>
<dbReference type="SUPFAM" id="SSF50249">
    <property type="entry name" value="Nucleic acid-binding proteins"/>
    <property type="match status" value="1"/>
</dbReference>
<dbReference type="SUPFAM" id="SSF55666">
    <property type="entry name" value="Ribonuclease PH domain 2-like"/>
    <property type="match status" value="2"/>
</dbReference>
<dbReference type="SUPFAM" id="SSF54211">
    <property type="entry name" value="Ribosomal protein S5 domain 2-like"/>
    <property type="match status" value="2"/>
</dbReference>
<dbReference type="PROSITE" id="PS50084">
    <property type="entry name" value="KH_TYPE_1"/>
    <property type="match status" value="1"/>
</dbReference>
<dbReference type="PROSITE" id="PS50126">
    <property type="entry name" value="S1"/>
    <property type="match status" value="1"/>
</dbReference>